<dbReference type="EMBL" id="U00096">
    <property type="protein sequence ID" value="ABD18705.1"/>
    <property type="molecule type" value="Genomic_DNA"/>
</dbReference>
<dbReference type="EMBL" id="AP009048">
    <property type="protein sequence ID" value="BAE77632.1"/>
    <property type="molecule type" value="Genomic_DNA"/>
</dbReference>
<dbReference type="RefSeq" id="WP_000805509.1">
    <property type="nucleotide sequence ID" value="NZ_STEB01000015.1"/>
</dbReference>
<dbReference type="RefSeq" id="YP_588471.1">
    <property type="nucleotide sequence ID" value="NC_000913.3"/>
</dbReference>
<dbReference type="SMR" id="Q2M7X4"/>
<dbReference type="BioGRID" id="4261481">
    <property type="interactions" value="3"/>
</dbReference>
<dbReference type="BioGRID" id="853415">
    <property type="interactions" value="5"/>
</dbReference>
<dbReference type="FunCoup" id="Q2M7X4">
    <property type="interactions" value="39"/>
</dbReference>
<dbReference type="IntAct" id="Q2M7X4">
    <property type="interactions" value="5"/>
</dbReference>
<dbReference type="STRING" id="511145.b4555"/>
<dbReference type="jPOST" id="Q2M7X4"/>
<dbReference type="PaxDb" id="511145-b4555"/>
<dbReference type="EnsemblBacteria" id="ABD18705">
    <property type="protein sequence ID" value="ABD18705"/>
    <property type="gene ID" value="b4555"/>
</dbReference>
<dbReference type="GeneID" id="1450300"/>
<dbReference type="GeneID" id="93778401"/>
<dbReference type="KEGG" id="ecj:JW5965"/>
<dbReference type="KEGG" id="eco:b4555"/>
<dbReference type="KEGG" id="ecoc:C3026_19845"/>
<dbReference type="PATRIC" id="fig|1411691.4.peg.3044"/>
<dbReference type="eggNOG" id="ENOG5032TQY">
    <property type="taxonomic scope" value="Bacteria"/>
</dbReference>
<dbReference type="HOGENOM" id="CLU_159877_2_0_6"/>
<dbReference type="InParanoid" id="Q2M7X4"/>
<dbReference type="OMA" id="QNNYWEA"/>
<dbReference type="OrthoDB" id="6571576at2"/>
<dbReference type="PhylomeDB" id="Q2M7X4"/>
<dbReference type="BioCyc" id="EcoCyc:MONOMER0-2691"/>
<dbReference type="PRO" id="PR:Q2M7X4"/>
<dbReference type="Proteomes" id="UP000000625">
    <property type="component" value="Chromosome"/>
</dbReference>
<dbReference type="InterPro" id="IPR048144">
    <property type="entry name" value="YicS_fam"/>
</dbReference>
<dbReference type="NCBIfam" id="NF041639">
    <property type="entry name" value="YicS_fam"/>
    <property type="match status" value="1"/>
</dbReference>
<organism>
    <name type="scientific">Escherichia coli (strain K12)</name>
    <dbReference type="NCBI Taxonomy" id="83333"/>
    <lineage>
        <taxon>Bacteria</taxon>
        <taxon>Pseudomonadati</taxon>
        <taxon>Pseudomonadota</taxon>
        <taxon>Gammaproteobacteria</taxon>
        <taxon>Enterobacterales</taxon>
        <taxon>Enterobacteriaceae</taxon>
        <taxon>Escherichia</taxon>
    </lineage>
</organism>
<gene>
    <name type="primary">yicS</name>
    <name type="ordered locus">b4555</name>
    <name type="ordered locus">JW5965</name>
</gene>
<accession>Q2M7X4</accession>
<accession>Q2EET8</accession>
<keyword id="KW-1185">Reference proteome</keyword>
<protein>
    <recommendedName>
        <fullName>Uncharacterized protein YicS</fullName>
    </recommendedName>
</protein>
<feature type="chain" id="PRO_0000262293" description="Uncharacterized protein YicS">
    <location>
        <begin position="1"/>
        <end position="97"/>
    </location>
</feature>
<proteinExistence type="predicted"/>
<name>YICS_ECOLI</name>
<sequence>MKPTTLLLIFTFFAMPGIVYAESPFSSLQSAKEKTTVLQDLRKICTPQASLSDEAWEKLMLSDENNKQHIREAIVAMERNNQSNYWEALGKVECPDM</sequence>
<reference key="1">
    <citation type="journal article" date="1997" name="Science">
        <title>The complete genome sequence of Escherichia coli K-12.</title>
        <authorList>
            <person name="Blattner F.R."/>
            <person name="Plunkett G. III"/>
            <person name="Bloch C.A."/>
            <person name="Perna N.T."/>
            <person name="Burland V."/>
            <person name="Riley M."/>
            <person name="Collado-Vides J."/>
            <person name="Glasner J.D."/>
            <person name="Rode C.K."/>
            <person name="Mayhew G.F."/>
            <person name="Gregor J."/>
            <person name="Davis N.W."/>
            <person name="Kirkpatrick H.A."/>
            <person name="Goeden M.A."/>
            <person name="Rose D.J."/>
            <person name="Mau B."/>
            <person name="Shao Y."/>
        </authorList>
    </citation>
    <scope>NUCLEOTIDE SEQUENCE [LARGE SCALE GENOMIC DNA]</scope>
    <source>
        <strain>K12 / MG1655 / ATCC 47076</strain>
    </source>
</reference>
<reference key="2">
    <citation type="journal article" date="2006" name="Mol. Syst. Biol.">
        <title>Highly accurate genome sequences of Escherichia coli K-12 strains MG1655 and W3110.</title>
        <authorList>
            <person name="Hayashi K."/>
            <person name="Morooka N."/>
            <person name="Yamamoto Y."/>
            <person name="Fujita K."/>
            <person name="Isono K."/>
            <person name="Choi S."/>
            <person name="Ohtsubo E."/>
            <person name="Baba T."/>
            <person name="Wanner B.L."/>
            <person name="Mori H."/>
            <person name="Horiuchi T."/>
        </authorList>
    </citation>
    <scope>NUCLEOTIDE SEQUENCE [LARGE SCALE GENOMIC DNA]</scope>
    <source>
        <strain>K12 / W3110 / ATCC 27325 / DSM 5911</strain>
    </source>
</reference>